<dbReference type="EC" id="6.1.1.20" evidence="1"/>
<dbReference type="EMBL" id="CP001068">
    <property type="protein sequence ID" value="ACD27108.1"/>
    <property type="molecule type" value="Genomic_DNA"/>
</dbReference>
<dbReference type="SMR" id="B2UGJ4"/>
<dbReference type="STRING" id="402626.Rpic_1973"/>
<dbReference type="KEGG" id="rpi:Rpic_1973"/>
<dbReference type="eggNOG" id="COG0016">
    <property type="taxonomic scope" value="Bacteria"/>
</dbReference>
<dbReference type="HOGENOM" id="CLU_025086_0_1_4"/>
<dbReference type="GO" id="GO:0005737">
    <property type="term" value="C:cytoplasm"/>
    <property type="evidence" value="ECO:0007669"/>
    <property type="project" value="UniProtKB-SubCell"/>
</dbReference>
<dbReference type="GO" id="GO:0005524">
    <property type="term" value="F:ATP binding"/>
    <property type="evidence" value="ECO:0007669"/>
    <property type="project" value="UniProtKB-UniRule"/>
</dbReference>
<dbReference type="GO" id="GO:0000287">
    <property type="term" value="F:magnesium ion binding"/>
    <property type="evidence" value="ECO:0007669"/>
    <property type="project" value="UniProtKB-UniRule"/>
</dbReference>
<dbReference type="GO" id="GO:0004826">
    <property type="term" value="F:phenylalanine-tRNA ligase activity"/>
    <property type="evidence" value="ECO:0007669"/>
    <property type="project" value="UniProtKB-UniRule"/>
</dbReference>
<dbReference type="GO" id="GO:0000049">
    <property type="term" value="F:tRNA binding"/>
    <property type="evidence" value="ECO:0007669"/>
    <property type="project" value="InterPro"/>
</dbReference>
<dbReference type="GO" id="GO:0006432">
    <property type="term" value="P:phenylalanyl-tRNA aminoacylation"/>
    <property type="evidence" value="ECO:0007669"/>
    <property type="project" value="UniProtKB-UniRule"/>
</dbReference>
<dbReference type="CDD" id="cd00496">
    <property type="entry name" value="PheRS_alpha_core"/>
    <property type="match status" value="1"/>
</dbReference>
<dbReference type="Gene3D" id="3.30.930.10">
    <property type="entry name" value="Bira Bifunctional Protein, Domain 2"/>
    <property type="match status" value="1"/>
</dbReference>
<dbReference type="HAMAP" id="MF_00281">
    <property type="entry name" value="Phe_tRNA_synth_alpha1"/>
    <property type="match status" value="1"/>
</dbReference>
<dbReference type="InterPro" id="IPR006195">
    <property type="entry name" value="aa-tRNA-synth_II"/>
</dbReference>
<dbReference type="InterPro" id="IPR045864">
    <property type="entry name" value="aa-tRNA-synth_II/BPL/LPL"/>
</dbReference>
<dbReference type="InterPro" id="IPR004529">
    <property type="entry name" value="Phe-tRNA-synth_IIc_asu"/>
</dbReference>
<dbReference type="InterPro" id="IPR004188">
    <property type="entry name" value="Phe-tRNA_ligase_II_N"/>
</dbReference>
<dbReference type="InterPro" id="IPR022911">
    <property type="entry name" value="Phe_tRNA_ligase_alpha1_bac"/>
</dbReference>
<dbReference type="InterPro" id="IPR002319">
    <property type="entry name" value="Phenylalanyl-tRNA_Synthase"/>
</dbReference>
<dbReference type="InterPro" id="IPR010978">
    <property type="entry name" value="tRNA-bd_arm"/>
</dbReference>
<dbReference type="NCBIfam" id="TIGR00468">
    <property type="entry name" value="pheS"/>
    <property type="match status" value="1"/>
</dbReference>
<dbReference type="PANTHER" id="PTHR11538:SF41">
    <property type="entry name" value="PHENYLALANINE--TRNA LIGASE, MITOCHONDRIAL"/>
    <property type="match status" value="1"/>
</dbReference>
<dbReference type="PANTHER" id="PTHR11538">
    <property type="entry name" value="PHENYLALANYL-TRNA SYNTHETASE"/>
    <property type="match status" value="1"/>
</dbReference>
<dbReference type="Pfam" id="PF02912">
    <property type="entry name" value="Phe_tRNA-synt_N"/>
    <property type="match status" value="1"/>
</dbReference>
<dbReference type="Pfam" id="PF01409">
    <property type="entry name" value="tRNA-synt_2d"/>
    <property type="match status" value="1"/>
</dbReference>
<dbReference type="SUPFAM" id="SSF55681">
    <property type="entry name" value="Class II aaRS and biotin synthetases"/>
    <property type="match status" value="1"/>
</dbReference>
<dbReference type="SUPFAM" id="SSF46589">
    <property type="entry name" value="tRNA-binding arm"/>
    <property type="match status" value="1"/>
</dbReference>
<dbReference type="PROSITE" id="PS50862">
    <property type="entry name" value="AA_TRNA_LIGASE_II"/>
    <property type="match status" value="1"/>
</dbReference>
<protein>
    <recommendedName>
        <fullName evidence="1">Phenylalanine--tRNA ligase alpha subunit</fullName>
        <ecNumber evidence="1">6.1.1.20</ecNumber>
    </recommendedName>
    <alternativeName>
        <fullName evidence="1">Phenylalanyl-tRNA synthetase alpha subunit</fullName>
        <shortName evidence="1">PheRS</shortName>
    </alternativeName>
</protein>
<reference key="1">
    <citation type="submission" date="2008-05" db="EMBL/GenBank/DDBJ databases">
        <title>Complete sequence of chromosome 1 of Ralstonia pickettii 12J.</title>
        <authorList>
            <person name="Lucas S."/>
            <person name="Copeland A."/>
            <person name="Lapidus A."/>
            <person name="Glavina del Rio T."/>
            <person name="Dalin E."/>
            <person name="Tice H."/>
            <person name="Bruce D."/>
            <person name="Goodwin L."/>
            <person name="Pitluck S."/>
            <person name="Meincke L."/>
            <person name="Brettin T."/>
            <person name="Detter J.C."/>
            <person name="Han C."/>
            <person name="Kuske C.R."/>
            <person name="Schmutz J."/>
            <person name="Larimer F."/>
            <person name="Land M."/>
            <person name="Hauser L."/>
            <person name="Kyrpides N."/>
            <person name="Mikhailova N."/>
            <person name="Marsh T."/>
            <person name="Richardson P."/>
        </authorList>
    </citation>
    <scope>NUCLEOTIDE SEQUENCE [LARGE SCALE GENOMIC DNA]</scope>
    <source>
        <strain>12J</strain>
    </source>
</reference>
<proteinExistence type="inferred from homology"/>
<feature type="chain" id="PRO_1000114903" description="Phenylalanine--tRNA ligase alpha subunit">
    <location>
        <begin position="1"/>
        <end position="344"/>
    </location>
</feature>
<feature type="binding site" evidence="1">
    <location>
        <position position="269"/>
    </location>
    <ligand>
        <name>Mg(2+)</name>
        <dbReference type="ChEBI" id="CHEBI:18420"/>
        <note>shared with beta subunit</note>
    </ligand>
</feature>
<sequence>MSLDLDQVVVDAQNAFASVEDNASLENEKARFLGKSGVLTDLLKGLGKLDPETRKTEGARINQAKSRVEEALTARRQALADALMNARLAAEAIDVTLPGRDVAEGSLHPVMNTWERVAKIFGSIGFDVADGPEIESDWMNFTALNNPDNHPARSMQDTFYIDGRDSEDKLLLLRTHTSPMQVRYARMHVEKYKHLDRIPPIKVIAPGRTYRVDSDATHSPMFHQVEGLWIADNISFADLKGVYTDFLRNFFERDDIQVRFRPSYFPFTEPSAEIDMAFGNGKWLEISGSGQVHPTVVRNMGLDPERYIGFAFGSGLERLTMLRYGINDLRLFFEGDVRFLRQFA</sequence>
<gene>
    <name evidence="1" type="primary">pheS</name>
    <name type="ordered locus">Rpic_1973</name>
</gene>
<evidence type="ECO:0000255" key="1">
    <source>
        <dbReference type="HAMAP-Rule" id="MF_00281"/>
    </source>
</evidence>
<name>SYFA_RALPJ</name>
<organism>
    <name type="scientific">Ralstonia pickettii (strain 12J)</name>
    <dbReference type="NCBI Taxonomy" id="402626"/>
    <lineage>
        <taxon>Bacteria</taxon>
        <taxon>Pseudomonadati</taxon>
        <taxon>Pseudomonadota</taxon>
        <taxon>Betaproteobacteria</taxon>
        <taxon>Burkholderiales</taxon>
        <taxon>Burkholderiaceae</taxon>
        <taxon>Ralstonia</taxon>
    </lineage>
</organism>
<comment type="catalytic activity">
    <reaction evidence="1">
        <text>tRNA(Phe) + L-phenylalanine + ATP = L-phenylalanyl-tRNA(Phe) + AMP + diphosphate + H(+)</text>
        <dbReference type="Rhea" id="RHEA:19413"/>
        <dbReference type="Rhea" id="RHEA-COMP:9668"/>
        <dbReference type="Rhea" id="RHEA-COMP:9699"/>
        <dbReference type="ChEBI" id="CHEBI:15378"/>
        <dbReference type="ChEBI" id="CHEBI:30616"/>
        <dbReference type="ChEBI" id="CHEBI:33019"/>
        <dbReference type="ChEBI" id="CHEBI:58095"/>
        <dbReference type="ChEBI" id="CHEBI:78442"/>
        <dbReference type="ChEBI" id="CHEBI:78531"/>
        <dbReference type="ChEBI" id="CHEBI:456215"/>
        <dbReference type="EC" id="6.1.1.20"/>
    </reaction>
</comment>
<comment type="cofactor">
    <cofactor evidence="1">
        <name>Mg(2+)</name>
        <dbReference type="ChEBI" id="CHEBI:18420"/>
    </cofactor>
    <text evidence="1">Binds 2 magnesium ions per tetramer.</text>
</comment>
<comment type="subunit">
    <text evidence="1">Tetramer of two alpha and two beta subunits.</text>
</comment>
<comment type="subcellular location">
    <subcellularLocation>
        <location evidence="1">Cytoplasm</location>
    </subcellularLocation>
</comment>
<comment type="similarity">
    <text evidence="1">Belongs to the class-II aminoacyl-tRNA synthetase family. Phe-tRNA synthetase alpha subunit type 1 subfamily.</text>
</comment>
<keyword id="KW-0030">Aminoacyl-tRNA synthetase</keyword>
<keyword id="KW-0067">ATP-binding</keyword>
<keyword id="KW-0963">Cytoplasm</keyword>
<keyword id="KW-0436">Ligase</keyword>
<keyword id="KW-0460">Magnesium</keyword>
<keyword id="KW-0479">Metal-binding</keyword>
<keyword id="KW-0547">Nucleotide-binding</keyword>
<keyword id="KW-0648">Protein biosynthesis</keyword>
<accession>B2UGJ4</accession>